<comment type="catalytic activity">
    <reaction>
        <text>[thioredoxin]-dithiol + NADP(+) = [thioredoxin]-disulfide + NADPH + H(+)</text>
        <dbReference type="Rhea" id="RHEA:20345"/>
        <dbReference type="Rhea" id="RHEA-COMP:10698"/>
        <dbReference type="Rhea" id="RHEA-COMP:10700"/>
        <dbReference type="ChEBI" id="CHEBI:15378"/>
        <dbReference type="ChEBI" id="CHEBI:29950"/>
        <dbReference type="ChEBI" id="CHEBI:50058"/>
        <dbReference type="ChEBI" id="CHEBI:57783"/>
        <dbReference type="ChEBI" id="CHEBI:58349"/>
        <dbReference type="EC" id="1.8.1.9"/>
    </reaction>
</comment>
<comment type="cofactor">
    <cofactor evidence="2">
        <name>FAD</name>
        <dbReference type="ChEBI" id="CHEBI:57692"/>
    </cofactor>
    <text evidence="2">Binds 1 FAD per subunit.</text>
</comment>
<comment type="subunit">
    <text evidence="2">Homodimer.</text>
</comment>
<comment type="subcellular location">
    <subcellularLocation>
        <location evidence="1">Cytoplasm</location>
    </subcellularLocation>
</comment>
<comment type="miscellaneous">
    <text>The active site is a redox-active disulfide bond.</text>
</comment>
<comment type="similarity">
    <text evidence="3">Belongs to the class-II pyridine nucleotide-disulfide oxidoreductase family.</text>
</comment>
<organism>
    <name type="scientific">Rickettsia conorii (strain ATCC VR-613 / Malish 7)</name>
    <dbReference type="NCBI Taxonomy" id="272944"/>
    <lineage>
        <taxon>Bacteria</taxon>
        <taxon>Pseudomonadati</taxon>
        <taxon>Pseudomonadota</taxon>
        <taxon>Alphaproteobacteria</taxon>
        <taxon>Rickettsiales</taxon>
        <taxon>Rickettsiaceae</taxon>
        <taxon>Rickettsieae</taxon>
        <taxon>Rickettsia</taxon>
        <taxon>spotted fever group</taxon>
    </lineage>
</organism>
<feature type="chain" id="PRO_0000166742" description="Thioredoxin reductase">
    <location>
        <begin position="1"/>
        <end position="310"/>
    </location>
</feature>
<feature type="binding site" evidence="2">
    <location>
        <begin position="34"/>
        <end position="41"/>
    </location>
    <ligand>
        <name>FAD</name>
        <dbReference type="ChEBI" id="CHEBI:57692"/>
    </ligand>
</feature>
<feature type="binding site" evidence="2">
    <location>
        <begin position="281"/>
        <end position="290"/>
    </location>
    <ligand>
        <name>FAD</name>
        <dbReference type="ChEBI" id="CHEBI:57692"/>
    </ligand>
</feature>
<feature type="disulfide bond" description="Redox-active" evidence="2">
    <location>
        <begin position="135"/>
        <end position="138"/>
    </location>
</feature>
<keyword id="KW-0963">Cytoplasm</keyword>
<keyword id="KW-1015">Disulfide bond</keyword>
<keyword id="KW-0274">FAD</keyword>
<keyword id="KW-0285">Flavoprotein</keyword>
<keyword id="KW-0521">NADP</keyword>
<keyword id="KW-0560">Oxidoreductase</keyword>
<keyword id="KW-0676">Redox-active center</keyword>
<reference key="1">
    <citation type="journal article" date="2001" name="Science">
        <title>Mechanisms of evolution in Rickettsia conorii and R. prowazekii.</title>
        <authorList>
            <person name="Ogata H."/>
            <person name="Audic S."/>
            <person name="Renesto-Audiffren P."/>
            <person name="Fournier P.-E."/>
            <person name="Barbe V."/>
            <person name="Samson D."/>
            <person name="Roux V."/>
            <person name="Cossart P."/>
            <person name="Weissenbach J."/>
            <person name="Claverie J.-M."/>
            <person name="Raoult D."/>
        </authorList>
    </citation>
    <scope>NUCLEOTIDE SEQUENCE [LARGE SCALE GENOMIC DNA]</scope>
    <source>
        <strain>ATCC VR-613 / Malish 7</strain>
    </source>
</reference>
<sequence length="310" mass="33469">MKITTKVLIIGSGPAGLSAAIYTARAALKPILINGMQPGGQLTITTDVENYPGFAETVQGPWLMEQMYMQAKNVGTEIVSDYVEKVDLSKRPFKVFTGAGNEYDAESIIICTGAEAKWLGIASEQKFRGFGVSACATCDGFFFKNQEIVVVGGGNSAVEEALYLTNHANKVTIVHRRDSFRAEKILQDRLFKNSKISVIWDHVVDEIVGSNKPKSVTGVKIQNVHTKEISLLNCSGVFIAIGHAPNTGLFTGQIVMDDDNYIITKSGTTRTSVEGVFAAGDVQDKIYRQAVTAAGTGCMAALEAEKFLNK</sequence>
<dbReference type="EC" id="1.8.1.9"/>
<dbReference type="EMBL" id="AE006914">
    <property type="protein sequence ID" value="AAL03156.1"/>
    <property type="molecule type" value="Genomic_DNA"/>
</dbReference>
<dbReference type="PIR" id="B97777">
    <property type="entry name" value="B97777"/>
</dbReference>
<dbReference type="RefSeq" id="WP_004995725.1">
    <property type="nucleotide sequence ID" value="NC_003103.1"/>
</dbReference>
<dbReference type="SMR" id="Q92I02"/>
<dbReference type="GeneID" id="95362235"/>
<dbReference type="KEGG" id="rco:RC0618"/>
<dbReference type="HOGENOM" id="CLU_031864_5_1_5"/>
<dbReference type="Proteomes" id="UP000000816">
    <property type="component" value="Chromosome"/>
</dbReference>
<dbReference type="GO" id="GO:0005737">
    <property type="term" value="C:cytoplasm"/>
    <property type="evidence" value="ECO:0007669"/>
    <property type="project" value="UniProtKB-SubCell"/>
</dbReference>
<dbReference type="GO" id="GO:0004791">
    <property type="term" value="F:thioredoxin-disulfide reductase (NADPH) activity"/>
    <property type="evidence" value="ECO:0007669"/>
    <property type="project" value="UniProtKB-EC"/>
</dbReference>
<dbReference type="GO" id="GO:0019430">
    <property type="term" value="P:removal of superoxide radicals"/>
    <property type="evidence" value="ECO:0007669"/>
    <property type="project" value="InterPro"/>
</dbReference>
<dbReference type="Gene3D" id="3.50.50.60">
    <property type="entry name" value="FAD/NAD(P)-binding domain"/>
    <property type="match status" value="2"/>
</dbReference>
<dbReference type="InterPro" id="IPR036188">
    <property type="entry name" value="FAD/NAD-bd_sf"/>
</dbReference>
<dbReference type="InterPro" id="IPR023753">
    <property type="entry name" value="FAD/NAD-binding_dom"/>
</dbReference>
<dbReference type="InterPro" id="IPR050097">
    <property type="entry name" value="Ferredoxin-NADP_redctase_2"/>
</dbReference>
<dbReference type="InterPro" id="IPR008255">
    <property type="entry name" value="Pyr_nucl-diS_OxRdtase_2_AS"/>
</dbReference>
<dbReference type="InterPro" id="IPR005982">
    <property type="entry name" value="Thioredox_Rdtase"/>
</dbReference>
<dbReference type="NCBIfam" id="TIGR01292">
    <property type="entry name" value="TRX_reduct"/>
    <property type="match status" value="1"/>
</dbReference>
<dbReference type="PANTHER" id="PTHR48105">
    <property type="entry name" value="THIOREDOXIN REDUCTASE 1-RELATED-RELATED"/>
    <property type="match status" value="1"/>
</dbReference>
<dbReference type="Pfam" id="PF07992">
    <property type="entry name" value="Pyr_redox_2"/>
    <property type="match status" value="1"/>
</dbReference>
<dbReference type="PRINTS" id="PR00368">
    <property type="entry name" value="FADPNR"/>
</dbReference>
<dbReference type="PRINTS" id="PR00469">
    <property type="entry name" value="PNDRDTASEII"/>
</dbReference>
<dbReference type="SUPFAM" id="SSF51905">
    <property type="entry name" value="FAD/NAD(P)-binding domain"/>
    <property type="match status" value="1"/>
</dbReference>
<dbReference type="PROSITE" id="PS00573">
    <property type="entry name" value="PYRIDINE_REDOX_2"/>
    <property type="match status" value="1"/>
</dbReference>
<protein>
    <recommendedName>
        <fullName>Thioredoxin reductase</fullName>
        <shortName>TRXR</shortName>
        <ecNumber>1.8.1.9</ecNumber>
    </recommendedName>
</protein>
<name>TRXB_RICCN</name>
<gene>
    <name type="primary">trxB</name>
    <name type="ordered locus">RC0618</name>
</gene>
<accession>Q92I02</accession>
<proteinExistence type="inferred from homology"/>
<evidence type="ECO:0000250" key="1"/>
<evidence type="ECO:0000250" key="2">
    <source>
        <dbReference type="UniProtKB" id="P0A9P4"/>
    </source>
</evidence>
<evidence type="ECO:0000305" key="3"/>